<proteinExistence type="inferred from homology"/>
<gene>
    <name evidence="1" type="primary">atpF</name>
    <name type="ordered locus">lwe2481</name>
</gene>
<feature type="chain" id="PRO_0000368569" description="ATP synthase subunit b">
    <location>
        <begin position="1"/>
        <end position="170"/>
    </location>
</feature>
<feature type="transmembrane region" description="Helical" evidence="1">
    <location>
        <begin position="11"/>
        <end position="31"/>
    </location>
</feature>
<dbReference type="EMBL" id="AM263198">
    <property type="protein sequence ID" value="CAK21899.1"/>
    <property type="molecule type" value="Genomic_DNA"/>
</dbReference>
<dbReference type="RefSeq" id="WP_011703212.1">
    <property type="nucleotide sequence ID" value="NC_008555.1"/>
</dbReference>
<dbReference type="SMR" id="A0ALL7"/>
<dbReference type="STRING" id="386043.lwe2481"/>
<dbReference type="GeneID" id="61190400"/>
<dbReference type="KEGG" id="lwe:lwe2481"/>
<dbReference type="eggNOG" id="COG0711">
    <property type="taxonomic scope" value="Bacteria"/>
</dbReference>
<dbReference type="HOGENOM" id="CLU_079215_4_2_9"/>
<dbReference type="OrthoDB" id="282095at2"/>
<dbReference type="Proteomes" id="UP000000779">
    <property type="component" value="Chromosome"/>
</dbReference>
<dbReference type="GO" id="GO:0005886">
    <property type="term" value="C:plasma membrane"/>
    <property type="evidence" value="ECO:0007669"/>
    <property type="project" value="UniProtKB-SubCell"/>
</dbReference>
<dbReference type="GO" id="GO:0045259">
    <property type="term" value="C:proton-transporting ATP synthase complex"/>
    <property type="evidence" value="ECO:0007669"/>
    <property type="project" value="UniProtKB-KW"/>
</dbReference>
<dbReference type="GO" id="GO:0046933">
    <property type="term" value="F:proton-transporting ATP synthase activity, rotational mechanism"/>
    <property type="evidence" value="ECO:0007669"/>
    <property type="project" value="UniProtKB-UniRule"/>
</dbReference>
<dbReference type="GO" id="GO:0046961">
    <property type="term" value="F:proton-transporting ATPase activity, rotational mechanism"/>
    <property type="evidence" value="ECO:0007669"/>
    <property type="project" value="TreeGrafter"/>
</dbReference>
<dbReference type="CDD" id="cd06503">
    <property type="entry name" value="ATP-synt_Fo_b"/>
    <property type="match status" value="1"/>
</dbReference>
<dbReference type="Gene3D" id="1.20.5.620">
    <property type="entry name" value="F1F0 ATP synthase subunit B, membrane domain"/>
    <property type="match status" value="1"/>
</dbReference>
<dbReference type="HAMAP" id="MF_01398">
    <property type="entry name" value="ATP_synth_b_bprime"/>
    <property type="match status" value="1"/>
</dbReference>
<dbReference type="InterPro" id="IPR028987">
    <property type="entry name" value="ATP_synth_B-like_membr_sf"/>
</dbReference>
<dbReference type="InterPro" id="IPR002146">
    <property type="entry name" value="ATP_synth_b/b'su_bac/chlpt"/>
</dbReference>
<dbReference type="InterPro" id="IPR005864">
    <property type="entry name" value="ATP_synth_F0_bsu_bac"/>
</dbReference>
<dbReference type="InterPro" id="IPR050059">
    <property type="entry name" value="ATP_synthase_B_chain"/>
</dbReference>
<dbReference type="NCBIfam" id="TIGR01144">
    <property type="entry name" value="ATP_synt_b"/>
    <property type="match status" value="1"/>
</dbReference>
<dbReference type="PANTHER" id="PTHR33445:SF1">
    <property type="entry name" value="ATP SYNTHASE SUBUNIT B"/>
    <property type="match status" value="1"/>
</dbReference>
<dbReference type="PANTHER" id="PTHR33445">
    <property type="entry name" value="ATP SYNTHASE SUBUNIT B', CHLOROPLASTIC"/>
    <property type="match status" value="1"/>
</dbReference>
<dbReference type="Pfam" id="PF00430">
    <property type="entry name" value="ATP-synt_B"/>
    <property type="match status" value="1"/>
</dbReference>
<dbReference type="SUPFAM" id="SSF81573">
    <property type="entry name" value="F1F0 ATP synthase subunit B, membrane domain"/>
    <property type="match status" value="1"/>
</dbReference>
<keyword id="KW-0066">ATP synthesis</keyword>
<keyword id="KW-1003">Cell membrane</keyword>
<keyword id="KW-0138">CF(0)</keyword>
<keyword id="KW-0375">Hydrogen ion transport</keyword>
<keyword id="KW-0406">Ion transport</keyword>
<keyword id="KW-0472">Membrane</keyword>
<keyword id="KW-0812">Transmembrane</keyword>
<keyword id="KW-1133">Transmembrane helix</keyword>
<keyword id="KW-0813">Transport</keyword>
<reference key="1">
    <citation type="journal article" date="2006" name="J. Bacteriol.">
        <title>Whole-genome sequence of Listeria welshimeri reveals common steps in genome reduction with Listeria innocua as compared to Listeria monocytogenes.</title>
        <authorList>
            <person name="Hain T."/>
            <person name="Steinweg C."/>
            <person name="Kuenne C.T."/>
            <person name="Billion A."/>
            <person name="Ghai R."/>
            <person name="Chatterjee S.S."/>
            <person name="Domann E."/>
            <person name="Kaerst U."/>
            <person name="Goesmann A."/>
            <person name="Bekel T."/>
            <person name="Bartels D."/>
            <person name="Kaiser O."/>
            <person name="Meyer F."/>
            <person name="Puehler A."/>
            <person name="Weisshaar B."/>
            <person name="Wehland J."/>
            <person name="Liang C."/>
            <person name="Dandekar T."/>
            <person name="Lampidis R."/>
            <person name="Kreft J."/>
            <person name="Goebel W."/>
            <person name="Chakraborty T."/>
        </authorList>
    </citation>
    <scope>NUCLEOTIDE SEQUENCE [LARGE SCALE GENOMIC DNA]</scope>
    <source>
        <strain>ATCC 35897 / DSM 20650 / CCUG 15529 / CIP 8149 / NCTC 11857 / SLCC 5334 / V8</strain>
    </source>
</reference>
<organism>
    <name type="scientific">Listeria welshimeri serovar 6b (strain ATCC 35897 / DSM 20650 / CCUG 15529 / CIP 8149 / NCTC 11857 / SLCC 5334 / V8)</name>
    <dbReference type="NCBI Taxonomy" id="386043"/>
    <lineage>
        <taxon>Bacteria</taxon>
        <taxon>Bacillati</taxon>
        <taxon>Bacillota</taxon>
        <taxon>Bacilli</taxon>
        <taxon>Bacillales</taxon>
        <taxon>Listeriaceae</taxon>
        <taxon>Listeria</taxon>
    </lineage>
</organism>
<comment type="function">
    <text evidence="1">F(1)F(0) ATP synthase produces ATP from ADP in the presence of a proton or sodium gradient. F-type ATPases consist of two structural domains, F(1) containing the extramembraneous catalytic core and F(0) containing the membrane proton channel, linked together by a central stalk and a peripheral stalk. During catalysis, ATP synthesis in the catalytic domain of F(1) is coupled via a rotary mechanism of the central stalk subunits to proton translocation.</text>
</comment>
<comment type="function">
    <text evidence="1">Component of the F(0) channel, it forms part of the peripheral stalk, linking F(1) to F(0).</text>
</comment>
<comment type="subunit">
    <text evidence="1">F-type ATPases have 2 components, F(1) - the catalytic core - and F(0) - the membrane proton channel. F(1) has five subunits: alpha(3), beta(3), gamma(1), delta(1), epsilon(1). F(0) has three main subunits: a(1), b(2) and c(10-14). The alpha and beta chains form an alternating ring which encloses part of the gamma chain. F(1) is attached to F(0) by a central stalk formed by the gamma and epsilon chains, while a peripheral stalk is formed by the delta and b chains.</text>
</comment>
<comment type="subcellular location">
    <subcellularLocation>
        <location evidence="1">Cell membrane</location>
        <topology evidence="1">Single-pass membrane protein</topology>
    </subcellularLocation>
</comment>
<comment type="similarity">
    <text evidence="1">Belongs to the ATPase B chain family.</text>
</comment>
<name>ATPF_LISW6</name>
<sequence>MLQPHLVIGSAFTFGDAFFTLFAFAILLVLIRIYAWKPLMGVMKEREEHIGSEIDAAEESRAQAEQLLAEQKSVLQQARVESQTMIENAKQLGEKEREEIVKTARRESERIKEEAKTDIAREKEDAISALREQVGSLSVLIASKVIEKNLDEKEQSNLIQDYIERLGDDK</sequence>
<protein>
    <recommendedName>
        <fullName evidence="1">ATP synthase subunit b</fullName>
    </recommendedName>
    <alternativeName>
        <fullName evidence="1">ATP synthase F(0) sector subunit b</fullName>
    </alternativeName>
    <alternativeName>
        <fullName evidence="1">ATPase subunit I</fullName>
    </alternativeName>
    <alternativeName>
        <fullName evidence="1">F-type ATPase subunit b</fullName>
        <shortName evidence="1">F-ATPase subunit b</shortName>
    </alternativeName>
</protein>
<evidence type="ECO:0000255" key="1">
    <source>
        <dbReference type="HAMAP-Rule" id="MF_01398"/>
    </source>
</evidence>
<accession>A0ALL7</accession>